<protein>
    <recommendedName>
        <fullName evidence="1">Fe/S biogenesis protein NfuA</fullName>
    </recommendedName>
</protein>
<accession>Q8ZLI7</accession>
<reference key="1">
    <citation type="journal article" date="2001" name="Nature">
        <title>Complete genome sequence of Salmonella enterica serovar Typhimurium LT2.</title>
        <authorList>
            <person name="McClelland M."/>
            <person name="Sanderson K.E."/>
            <person name="Spieth J."/>
            <person name="Clifton S.W."/>
            <person name="Latreille P."/>
            <person name="Courtney L."/>
            <person name="Porwollik S."/>
            <person name="Ali J."/>
            <person name="Dante M."/>
            <person name="Du F."/>
            <person name="Hou S."/>
            <person name="Layman D."/>
            <person name="Leonard S."/>
            <person name="Nguyen C."/>
            <person name="Scott K."/>
            <person name="Holmes A."/>
            <person name="Grewal N."/>
            <person name="Mulvaney E."/>
            <person name="Ryan E."/>
            <person name="Sun H."/>
            <person name="Florea L."/>
            <person name="Miller W."/>
            <person name="Stoneking T."/>
            <person name="Nhan M."/>
            <person name="Waterston R."/>
            <person name="Wilson R.K."/>
        </authorList>
    </citation>
    <scope>NUCLEOTIDE SEQUENCE [LARGE SCALE GENOMIC DNA]</scope>
    <source>
        <strain>LT2 / SGSC1412 / ATCC 700720</strain>
    </source>
</reference>
<name>NFUA_SALTY</name>
<comment type="function">
    <text evidence="1">Involved in iron-sulfur cluster biogenesis. Binds a 4Fe-4S cluster, can transfer this cluster to apoproteins, and thereby intervenes in the maturation of Fe/S proteins. Could also act as a scaffold/chaperone for damaged Fe/S proteins.</text>
</comment>
<comment type="cofactor">
    <cofactor evidence="1">
        <name>[4Fe-4S] cluster</name>
        <dbReference type="ChEBI" id="CHEBI:49883"/>
    </cofactor>
    <text evidence="1">Binds 1 [4Fe-4S] cluster per subunit. The cluster is presumably bound at the interface of two monomers.</text>
</comment>
<comment type="subunit">
    <text evidence="1">Homodimer.</text>
</comment>
<comment type="similarity">
    <text evidence="1">Belongs to the NfuA family.</text>
</comment>
<keyword id="KW-0004">4Fe-4S</keyword>
<keyword id="KW-0408">Iron</keyword>
<keyword id="KW-0411">Iron-sulfur</keyword>
<keyword id="KW-0479">Metal-binding</keyword>
<keyword id="KW-1185">Reference proteome</keyword>
<organism>
    <name type="scientific">Salmonella typhimurium (strain LT2 / SGSC1412 / ATCC 700720)</name>
    <dbReference type="NCBI Taxonomy" id="99287"/>
    <lineage>
        <taxon>Bacteria</taxon>
        <taxon>Pseudomonadati</taxon>
        <taxon>Pseudomonadota</taxon>
        <taxon>Gammaproteobacteria</taxon>
        <taxon>Enterobacterales</taxon>
        <taxon>Enterobacteriaceae</taxon>
        <taxon>Salmonella</taxon>
    </lineage>
</organism>
<feature type="chain" id="PRO_0000209468" description="Fe/S biogenesis protein NfuA">
    <location>
        <begin position="1"/>
        <end position="191"/>
    </location>
</feature>
<feature type="binding site" evidence="1">
    <location>
        <position position="149"/>
    </location>
    <ligand>
        <name>[4Fe-4S] cluster</name>
        <dbReference type="ChEBI" id="CHEBI:49883"/>
    </ligand>
</feature>
<feature type="binding site" evidence="1">
    <location>
        <position position="152"/>
    </location>
    <ligand>
        <name>[4Fe-4S] cluster</name>
        <dbReference type="ChEBI" id="CHEBI:49883"/>
    </ligand>
</feature>
<proteinExistence type="inferred from homology"/>
<evidence type="ECO:0000255" key="1">
    <source>
        <dbReference type="HAMAP-Rule" id="MF_01637"/>
    </source>
</evidence>
<gene>
    <name evidence="1" type="primary">nfuA</name>
    <name type="ordered locus">STM3511</name>
</gene>
<dbReference type="EMBL" id="AE006468">
    <property type="protein sequence ID" value="AAL22373.1"/>
    <property type="molecule type" value="Genomic_DNA"/>
</dbReference>
<dbReference type="RefSeq" id="WP_000619387.1">
    <property type="nucleotide sequence ID" value="NC_003197.2"/>
</dbReference>
<dbReference type="SMR" id="Q8ZLI7"/>
<dbReference type="STRING" id="99287.STM3511"/>
<dbReference type="PaxDb" id="99287-STM3511"/>
<dbReference type="GeneID" id="66757844"/>
<dbReference type="KEGG" id="stm:STM3511"/>
<dbReference type="PATRIC" id="fig|99287.12.peg.3711"/>
<dbReference type="HOGENOM" id="CLU_094569_0_0_6"/>
<dbReference type="OMA" id="CLAYCRP"/>
<dbReference type="PhylomeDB" id="Q8ZLI7"/>
<dbReference type="BioCyc" id="SENT99287:STM3511-MONOMER"/>
<dbReference type="Proteomes" id="UP000001014">
    <property type="component" value="Chromosome"/>
</dbReference>
<dbReference type="GO" id="GO:0051539">
    <property type="term" value="F:4 iron, 4 sulfur cluster binding"/>
    <property type="evidence" value="ECO:0000318"/>
    <property type="project" value="GO_Central"/>
</dbReference>
<dbReference type="GO" id="GO:0005506">
    <property type="term" value="F:iron ion binding"/>
    <property type="evidence" value="ECO:0007669"/>
    <property type="project" value="InterPro"/>
</dbReference>
<dbReference type="GO" id="GO:0016226">
    <property type="term" value="P:iron-sulfur cluster assembly"/>
    <property type="evidence" value="ECO:0007669"/>
    <property type="project" value="UniProtKB-UniRule"/>
</dbReference>
<dbReference type="GO" id="GO:0051604">
    <property type="term" value="P:protein maturation"/>
    <property type="evidence" value="ECO:0007669"/>
    <property type="project" value="UniProtKB-UniRule"/>
</dbReference>
<dbReference type="FunFam" id="2.60.300.12:FF:000004">
    <property type="entry name" value="Fe/S biogenesis protein NfuA"/>
    <property type="match status" value="1"/>
</dbReference>
<dbReference type="FunFam" id="3.30.300.130:FF:000002">
    <property type="entry name" value="Fe/S biogenesis protein NfuA"/>
    <property type="match status" value="1"/>
</dbReference>
<dbReference type="Gene3D" id="3.30.300.130">
    <property type="entry name" value="Fe-S cluster assembly (FSCA)"/>
    <property type="match status" value="1"/>
</dbReference>
<dbReference type="Gene3D" id="2.60.300.12">
    <property type="entry name" value="HesB-like domain"/>
    <property type="match status" value="1"/>
</dbReference>
<dbReference type="HAMAP" id="MF_01637">
    <property type="entry name" value="Fe_S_biogen_NfuA"/>
    <property type="match status" value="1"/>
</dbReference>
<dbReference type="InterPro" id="IPR017726">
    <property type="entry name" value="Fe/S_biogenesis_protein_NfuA"/>
</dbReference>
<dbReference type="InterPro" id="IPR000361">
    <property type="entry name" value="FeS_biogenesis"/>
</dbReference>
<dbReference type="InterPro" id="IPR034904">
    <property type="entry name" value="FSCA_dom_sf"/>
</dbReference>
<dbReference type="InterPro" id="IPR035903">
    <property type="entry name" value="HesB-like_dom_sf"/>
</dbReference>
<dbReference type="InterPro" id="IPR001075">
    <property type="entry name" value="NIF_FeS_clus_asmbl_NifU_C"/>
</dbReference>
<dbReference type="NCBIfam" id="NF008392">
    <property type="entry name" value="PRK11190.1"/>
    <property type="match status" value="1"/>
</dbReference>
<dbReference type="NCBIfam" id="TIGR03341">
    <property type="entry name" value="YhgI_GntY"/>
    <property type="match status" value="1"/>
</dbReference>
<dbReference type="PANTHER" id="PTHR11178:SF51">
    <property type="entry name" value="FE_S BIOGENESIS PROTEIN NFUA"/>
    <property type="match status" value="1"/>
</dbReference>
<dbReference type="PANTHER" id="PTHR11178">
    <property type="entry name" value="IRON-SULFUR CLUSTER SCAFFOLD PROTEIN NFU-RELATED"/>
    <property type="match status" value="1"/>
</dbReference>
<dbReference type="Pfam" id="PF01521">
    <property type="entry name" value="Fe-S_biosyn"/>
    <property type="match status" value="1"/>
</dbReference>
<dbReference type="Pfam" id="PF01106">
    <property type="entry name" value="NifU"/>
    <property type="match status" value="1"/>
</dbReference>
<dbReference type="SUPFAM" id="SSF117916">
    <property type="entry name" value="Fe-S cluster assembly (FSCA) domain-like"/>
    <property type="match status" value="1"/>
</dbReference>
<dbReference type="SUPFAM" id="SSF89360">
    <property type="entry name" value="HesB-like domain"/>
    <property type="match status" value="1"/>
</dbReference>
<sequence length="191" mass="20938">MIRISDAAQAHFAKLLANQEEGTQIRVFVINPGTPNAECGVSYCPPDAVEATDTALKFDLLTAYVDELSAPYLEDAEIDFVTDQLGSQLTLKAPNAKMRKVADDAPLMERVEYALQSQINPQLAGHGGRVSLMEITDEGYAILQFGGGCNGCSMVDVTLKEGIEKQLLNEFPELKGVRDLTEHQRGEHSYY</sequence>